<keyword id="KW-1003">Cell membrane</keyword>
<keyword id="KW-0472">Membrane</keyword>
<keyword id="KW-1185">Reference proteome</keyword>
<keyword id="KW-0812">Transmembrane</keyword>
<keyword id="KW-1133">Transmembrane helix</keyword>
<dbReference type="EMBL" id="CP000800">
    <property type="protein sequence ID" value="ABV20885.1"/>
    <property type="molecule type" value="Genomic_DNA"/>
</dbReference>
<dbReference type="RefSeq" id="WP_000383836.1">
    <property type="nucleotide sequence ID" value="NC_009801.1"/>
</dbReference>
<dbReference type="SMR" id="A7ZPR6"/>
<dbReference type="KEGG" id="ecw:EcE24377A_2752"/>
<dbReference type="HOGENOM" id="CLU_198936_0_0_6"/>
<dbReference type="Proteomes" id="UP000001122">
    <property type="component" value="Chromosome"/>
</dbReference>
<dbReference type="GO" id="GO:0005886">
    <property type="term" value="C:plasma membrane"/>
    <property type="evidence" value="ECO:0007669"/>
    <property type="project" value="UniProtKB-SubCell"/>
</dbReference>
<dbReference type="HAMAP" id="MF_01566">
    <property type="entry name" value="UPF0370"/>
    <property type="match status" value="1"/>
</dbReference>
<dbReference type="InterPro" id="IPR020910">
    <property type="entry name" value="UPF0370"/>
</dbReference>
<dbReference type="NCBIfam" id="NF010185">
    <property type="entry name" value="PRK13664.1"/>
    <property type="match status" value="1"/>
</dbReference>
<dbReference type="Pfam" id="PF13980">
    <property type="entry name" value="UPF0370"/>
    <property type="match status" value="1"/>
</dbReference>
<proteinExistence type="inferred from homology"/>
<feature type="chain" id="PRO_1000069080" description="UPF0370 protein YpfN">
    <location>
        <begin position="1"/>
        <end position="66"/>
    </location>
</feature>
<feature type="transmembrane region" description="Helical" evidence="1">
    <location>
        <begin position="4"/>
        <end position="24"/>
    </location>
</feature>
<feature type="region of interest" description="Disordered" evidence="2">
    <location>
        <begin position="39"/>
        <end position="66"/>
    </location>
</feature>
<feature type="compositionally biased region" description="Basic and acidic residues" evidence="2">
    <location>
        <begin position="42"/>
        <end position="51"/>
    </location>
</feature>
<comment type="subcellular location">
    <subcellularLocation>
        <location evidence="1">Cell membrane</location>
        <topology evidence="1">Single-pass membrane protein</topology>
    </subcellularLocation>
</comment>
<comment type="similarity">
    <text evidence="1">Belongs to the UPF0370 family.</text>
</comment>
<evidence type="ECO:0000255" key="1">
    <source>
        <dbReference type="HAMAP-Rule" id="MF_01566"/>
    </source>
</evidence>
<evidence type="ECO:0000256" key="2">
    <source>
        <dbReference type="SAM" id="MobiDB-lite"/>
    </source>
</evidence>
<name>YPFN_ECO24</name>
<accession>A7ZPR6</accession>
<organism>
    <name type="scientific">Escherichia coli O139:H28 (strain E24377A / ETEC)</name>
    <dbReference type="NCBI Taxonomy" id="331111"/>
    <lineage>
        <taxon>Bacteria</taxon>
        <taxon>Pseudomonadati</taxon>
        <taxon>Pseudomonadota</taxon>
        <taxon>Gammaproteobacteria</taxon>
        <taxon>Enterobacterales</taxon>
        <taxon>Enterobacteriaceae</taxon>
        <taxon>Escherichia</taxon>
    </lineage>
</organism>
<reference key="1">
    <citation type="journal article" date="2008" name="J. Bacteriol.">
        <title>The pangenome structure of Escherichia coli: comparative genomic analysis of E. coli commensal and pathogenic isolates.</title>
        <authorList>
            <person name="Rasko D.A."/>
            <person name="Rosovitz M.J."/>
            <person name="Myers G.S.A."/>
            <person name="Mongodin E.F."/>
            <person name="Fricke W.F."/>
            <person name="Gajer P."/>
            <person name="Crabtree J."/>
            <person name="Sebaihia M."/>
            <person name="Thomson N.R."/>
            <person name="Chaudhuri R."/>
            <person name="Henderson I.R."/>
            <person name="Sperandio V."/>
            <person name="Ravel J."/>
        </authorList>
    </citation>
    <scope>NUCLEOTIDE SEQUENCE [LARGE SCALE GENOMIC DNA]</scope>
    <source>
        <strain>E24377A / ETEC</strain>
    </source>
</reference>
<gene>
    <name evidence="1" type="primary">ypfN</name>
    <name type="ordered locus">EcE24377A_2752</name>
</gene>
<protein>
    <recommendedName>
        <fullName evidence="1">UPF0370 protein YpfN</fullName>
    </recommendedName>
</protein>
<sequence>MDWLAKYWWILVIVFLVGVLLNVIKDLKRVDHKKFLANKPELPPHRDFNDKWDDDDDWPKKDQPKK</sequence>